<keyword id="KW-0030">Aminoacyl-tRNA synthetase</keyword>
<keyword id="KW-0067">ATP-binding</keyword>
<keyword id="KW-0963">Cytoplasm</keyword>
<keyword id="KW-0436">Ligase</keyword>
<keyword id="KW-0479">Metal-binding</keyword>
<keyword id="KW-0547">Nucleotide-binding</keyword>
<keyword id="KW-0648">Protein biosynthesis</keyword>
<keyword id="KW-1185">Reference proteome</keyword>
<keyword id="KW-0862">Zinc</keyword>
<gene>
    <name evidence="1" type="primary">ileS</name>
    <name type="ordered locus">MG345</name>
</gene>
<organism>
    <name type="scientific">Mycoplasma genitalium (strain ATCC 33530 / DSM 19775 / NCTC 10195 / G37)</name>
    <name type="common">Mycoplasmoides genitalium</name>
    <dbReference type="NCBI Taxonomy" id="243273"/>
    <lineage>
        <taxon>Bacteria</taxon>
        <taxon>Bacillati</taxon>
        <taxon>Mycoplasmatota</taxon>
        <taxon>Mycoplasmoidales</taxon>
        <taxon>Mycoplasmoidaceae</taxon>
        <taxon>Mycoplasmoides</taxon>
    </lineage>
</organism>
<protein>
    <recommendedName>
        <fullName evidence="1">Isoleucine--tRNA ligase</fullName>
        <ecNumber evidence="1">6.1.1.5</ecNumber>
    </recommendedName>
    <alternativeName>
        <fullName evidence="1">Isoleucyl-tRNA synthetase</fullName>
        <shortName evidence="1">IleRS</shortName>
    </alternativeName>
</protein>
<sequence>MDLKKTLLMPKTSFAMQANLSTSEKNFHDFWKDKKVFQKLKKQNKGKQIKILHDGPPYANGSIHVGHALNKILKDFILRSWLYEGYDVVFIPGWDCHGLPIEHAVSKKNPSSYSNLSTVEKRKLCHQFALSQIAVQKEQFQRLGLLNDFQNCYYTIDESFQFKELELFLQAIKKGLIFQDLKPTYWSPISRTSLAEAEIEYKEVNSIALYLTFKVSKSDFLDENANLLVWTTTPWTLPTNQAIAIHPDFDYLLFEYNQQKFVILEKLFEVFTNKLNWTNAIKLKKFKGSNLKNSSYSHCFYNKVLPVLMGIHVVDNEGTGIVHSSPAFGIDDFYLCQKNKIKEVLISIDEKGVFNNLLNDKELENCFYLKANDLIINRLKQNNSFIFSEVISHREPHDWRSKTPVIYRASKQLFIKTKSIKKQLKKQINQVNFLNSKNQLRLKEMLLQRDEWCISRQRVWGLPIPIVYANNKPLLDFSTIQYTIKQLKKHGIDSWFEKDVTCFLKPDKTKKWVKYHKEIDTLDVWFDSGSSYNVLEINKYGSIADLYIEGSDQYRGWFNSSSNCGIIQNDLIPFKSLVSHGFTLDENGNKMSKSLGNIVDPLKICDQYGADILRLWVANTDWQIDNKIGVNILKQVAEQYRRIRNSLLRFILGNINGFNFTSMDDYKFSLEDKIVIHKTNSLVEQIEKFLEKYNFLGCLKVINKFVLWLSSWYFEIIKDTLYCDAKNNPNRLAKQAVLNYIFTQLISFLNIFIPHTAEDAWKNYSFNKKPISVNLFTKPTVFKVANSKNLENIYKTFTSIKNAAFKEIEKLRKEGLISKNNQIELTVGINKKIPKKLKDNLALWLNVNSVNLTNNENEIKVKKTKKTMCERCWNFQTIIKQKLDHNLCSRCFKVC</sequence>
<reference key="1">
    <citation type="journal article" date="1995" name="Science">
        <title>The minimal gene complement of Mycoplasma genitalium.</title>
        <authorList>
            <person name="Fraser C.M."/>
            <person name="Gocayne J.D."/>
            <person name="White O."/>
            <person name="Adams M.D."/>
            <person name="Clayton R.A."/>
            <person name="Fleischmann R.D."/>
            <person name="Bult C.J."/>
            <person name="Kerlavage A.R."/>
            <person name="Sutton G.G."/>
            <person name="Kelley J.M."/>
            <person name="Fritchman J.L."/>
            <person name="Weidman J.F."/>
            <person name="Small K.V."/>
            <person name="Sandusky M."/>
            <person name="Fuhrmann J.L."/>
            <person name="Nguyen D.T."/>
            <person name="Utterback T.R."/>
            <person name="Saudek D.M."/>
            <person name="Phillips C.A."/>
            <person name="Merrick J.M."/>
            <person name="Tomb J.-F."/>
            <person name="Dougherty B.A."/>
            <person name="Bott K.F."/>
            <person name="Hu P.-C."/>
            <person name="Lucier T.S."/>
            <person name="Peterson S.N."/>
            <person name="Smith H.O."/>
            <person name="Hutchison C.A. III"/>
            <person name="Venter J.C."/>
        </authorList>
    </citation>
    <scope>NUCLEOTIDE SEQUENCE [LARGE SCALE GENOMIC DNA]</scope>
    <source>
        <strain>ATCC 33530 / DSM 19775 / NCTC 10195 / G37</strain>
    </source>
</reference>
<reference key="2">
    <citation type="journal article" date="1993" name="J. Bacteriol.">
        <title>A survey of the Mycoplasma genitalium genome by using random sequencing.</title>
        <authorList>
            <person name="Peterson S.N."/>
            <person name="Hu P.-C."/>
            <person name="Bott K.F."/>
            <person name="Hutchison C.A. III"/>
        </authorList>
    </citation>
    <scope>NUCLEOTIDE SEQUENCE [GENOMIC DNA] OF 262-371 AND 605-711</scope>
    <source>
        <strain>ATCC 33530 / DSM 19775 / NCTC 10195 / G37</strain>
    </source>
</reference>
<reference key="3">
    <citation type="journal article" date="2006" name="Proc. Natl. Acad. Sci. U.S.A.">
        <title>Essential genes of a minimal bacterium.</title>
        <authorList>
            <person name="Glass J.I."/>
            <person name="Assad-Garcia N."/>
            <person name="Alperovich N."/>
            <person name="Yooseph S."/>
            <person name="Lewis M.R."/>
            <person name="Maruf M."/>
            <person name="Hutchison C.A. III"/>
            <person name="Smith H.O."/>
            <person name="Venter J.C."/>
        </authorList>
    </citation>
    <scope>SEQUENCE REVISION TO 791</scope>
    <scope>DISRUPTION PHENOTYPE</scope>
    <source>
        <strain>ATCC 33530 / DSM 19775 / NCTC 10195 / G37</strain>
    </source>
</reference>
<accession>P47587</accession>
<comment type="function">
    <text evidence="1">Catalyzes the attachment of isoleucine to tRNA(Ile). As IleRS can inadvertently accommodate and process structurally similar amino acids such as valine, to avoid such errors it has two additional distinct tRNA(Ile)-dependent editing activities. One activity is designated as 'pretransfer' editing and involves the hydrolysis of activated Val-AMP. The other activity is designated 'posttransfer' editing and involves deacylation of mischarged Val-tRNA(Ile).</text>
</comment>
<comment type="catalytic activity">
    <reaction evidence="1">
        <text>tRNA(Ile) + L-isoleucine + ATP = L-isoleucyl-tRNA(Ile) + AMP + diphosphate</text>
        <dbReference type="Rhea" id="RHEA:11060"/>
        <dbReference type="Rhea" id="RHEA-COMP:9666"/>
        <dbReference type="Rhea" id="RHEA-COMP:9695"/>
        <dbReference type="ChEBI" id="CHEBI:30616"/>
        <dbReference type="ChEBI" id="CHEBI:33019"/>
        <dbReference type="ChEBI" id="CHEBI:58045"/>
        <dbReference type="ChEBI" id="CHEBI:78442"/>
        <dbReference type="ChEBI" id="CHEBI:78528"/>
        <dbReference type="ChEBI" id="CHEBI:456215"/>
        <dbReference type="EC" id="6.1.1.5"/>
    </reaction>
</comment>
<comment type="cofactor">
    <cofactor evidence="1">
        <name>Zn(2+)</name>
        <dbReference type="ChEBI" id="CHEBI:29105"/>
    </cofactor>
    <text evidence="1">Binds 1 zinc ion per subunit.</text>
</comment>
<comment type="subunit">
    <text evidence="1">Monomer.</text>
</comment>
<comment type="subcellular location">
    <subcellularLocation>
        <location evidence="1">Cytoplasm</location>
    </subcellularLocation>
</comment>
<comment type="domain">
    <text evidence="1">IleRS has two distinct active sites: one for aminoacylation and one for editing. The misactivated valine is translocated from the active site to the editing site, which sterically excludes the correctly activated isoleucine. The single editing site contains two valyl binding pockets, one specific for each substrate (Val-AMP or Val-tRNA(Ile)).</text>
</comment>
<comment type="disruption phenotype">
    <text evidence="2">Probably essential, it was not disrupted in a global transposon mutagenesis study.</text>
</comment>
<comment type="similarity">
    <text evidence="1">Belongs to the class-I aminoacyl-tRNA synthetase family. IleS type 1 subfamily.</text>
</comment>
<feature type="chain" id="PRO_0000098417" description="Isoleucine--tRNA ligase">
    <location>
        <begin position="1"/>
        <end position="895"/>
    </location>
</feature>
<feature type="short sequence motif" description="'HIGH' region">
    <location>
        <begin position="57"/>
        <end position="67"/>
    </location>
</feature>
<feature type="short sequence motif" description="'KMSKS' region">
    <location>
        <begin position="590"/>
        <end position="594"/>
    </location>
</feature>
<feature type="binding site" evidence="1">
    <location>
        <position position="549"/>
    </location>
    <ligand>
        <name>L-isoleucyl-5'-AMP</name>
        <dbReference type="ChEBI" id="CHEBI:178002"/>
    </ligand>
</feature>
<feature type="binding site" evidence="1">
    <location>
        <position position="593"/>
    </location>
    <ligand>
        <name>ATP</name>
        <dbReference type="ChEBI" id="CHEBI:30616"/>
    </ligand>
</feature>
<feature type="binding site" evidence="1">
    <location>
        <position position="869"/>
    </location>
    <ligand>
        <name>Zn(2+)</name>
        <dbReference type="ChEBI" id="CHEBI:29105"/>
    </ligand>
</feature>
<feature type="binding site" evidence="1">
    <location>
        <position position="872"/>
    </location>
    <ligand>
        <name>Zn(2+)</name>
        <dbReference type="ChEBI" id="CHEBI:29105"/>
    </ligand>
</feature>
<feature type="binding site" evidence="1">
    <location>
        <position position="888"/>
    </location>
    <ligand>
        <name>Zn(2+)</name>
        <dbReference type="ChEBI" id="CHEBI:29105"/>
    </ligand>
</feature>
<feature type="binding site" evidence="1">
    <location>
        <position position="891"/>
    </location>
    <ligand>
        <name>Zn(2+)</name>
        <dbReference type="ChEBI" id="CHEBI:29105"/>
    </ligand>
</feature>
<name>SYI_MYCGE</name>
<proteinExistence type="inferred from homology"/>
<evidence type="ECO:0000255" key="1">
    <source>
        <dbReference type="HAMAP-Rule" id="MF_02002"/>
    </source>
</evidence>
<evidence type="ECO:0000269" key="2">
    <source>
    </source>
</evidence>
<dbReference type="EC" id="6.1.1.5" evidence="1"/>
<dbReference type="EMBL" id="L43967">
    <property type="protein sequence ID" value="AAC71570.2"/>
    <property type="molecule type" value="Genomic_DNA"/>
</dbReference>
<dbReference type="EMBL" id="U02196">
    <property type="protein sequence ID" value="AAD12482.1"/>
    <property type="molecule type" value="Genomic_DNA"/>
</dbReference>
<dbReference type="EMBL" id="U02254">
    <property type="protein sequence ID" value="AAD12519.1"/>
    <property type="molecule type" value="Genomic_DNA"/>
</dbReference>
<dbReference type="PIR" id="B64238">
    <property type="entry name" value="B64238"/>
</dbReference>
<dbReference type="RefSeq" id="WP_010869443.1">
    <property type="nucleotide sequence ID" value="NC_000908.2"/>
</dbReference>
<dbReference type="SMR" id="P47587"/>
<dbReference type="FunCoup" id="P47587">
    <property type="interactions" value="199"/>
</dbReference>
<dbReference type="STRING" id="243273.MG_345"/>
<dbReference type="GeneID" id="88282522"/>
<dbReference type="KEGG" id="mge:MG_345"/>
<dbReference type="eggNOG" id="COG0060">
    <property type="taxonomic scope" value="Bacteria"/>
</dbReference>
<dbReference type="HOGENOM" id="CLU_001493_7_1_14"/>
<dbReference type="InParanoid" id="P47587"/>
<dbReference type="OrthoDB" id="9810365at2"/>
<dbReference type="BioCyc" id="MGEN243273:G1GJ2-432-MONOMER"/>
<dbReference type="Proteomes" id="UP000000807">
    <property type="component" value="Chromosome"/>
</dbReference>
<dbReference type="GO" id="GO:0005829">
    <property type="term" value="C:cytosol"/>
    <property type="evidence" value="ECO:0000318"/>
    <property type="project" value="GO_Central"/>
</dbReference>
<dbReference type="GO" id="GO:0002161">
    <property type="term" value="F:aminoacyl-tRNA deacylase activity"/>
    <property type="evidence" value="ECO:0007669"/>
    <property type="project" value="InterPro"/>
</dbReference>
<dbReference type="GO" id="GO:0005524">
    <property type="term" value="F:ATP binding"/>
    <property type="evidence" value="ECO:0007669"/>
    <property type="project" value="UniProtKB-UniRule"/>
</dbReference>
<dbReference type="GO" id="GO:0004822">
    <property type="term" value="F:isoleucine-tRNA ligase activity"/>
    <property type="evidence" value="ECO:0000318"/>
    <property type="project" value="GO_Central"/>
</dbReference>
<dbReference type="GO" id="GO:0000049">
    <property type="term" value="F:tRNA binding"/>
    <property type="evidence" value="ECO:0007669"/>
    <property type="project" value="InterPro"/>
</dbReference>
<dbReference type="GO" id="GO:0008270">
    <property type="term" value="F:zinc ion binding"/>
    <property type="evidence" value="ECO:0007669"/>
    <property type="project" value="UniProtKB-UniRule"/>
</dbReference>
<dbReference type="GO" id="GO:0006428">
    <property type="term" value="P:isoleucyl-tRNA aminoacylation"/>
    <property type="evidence" value="ECO:0000318"/>
    <property type="project" value="GO_Central"/>
</dbReference>
<dbReference type="CDD" id="cd07960">
    <property type="entry name" value="Anticodon_Ia_Ile_BEm"/>
    <property type="match status" value="1"/>
</dbReference>
<dbReference type="CDD" id="cd00818">
    <property type="entry name" value="IleRS_core"/>
    <property type="match status" value="1"/>
</dbReference>
<dbReference type="FunFam" id="3.40.50.620:FF:000042">
    <property type="entry name" value="Isoleucine--tRNA ligase"/>
    <property type="match status" value="1"/>
</dbReference>
<dbReference type="Gene3D" id="1.10.730.20">
    <property type="match status" value="1"/>
</dbReference>
<dbReference type="Gene3D" id="3.40.50.620">
    <property type="entry name" value="HUPs"/>
    <property type="match status" value="2"/>
</dbReference>
<dbReference type="HAMAP" id="MF_02002">
    <property type="entry name" value="Ile_tRNA_synth_type1"/>
    <property type="match status" value="1"/>
</dbReference>
<dbReference type="InterPro" id="IPR001412">
    <property type="entry name" value="aa-tRNA-synth_I_CS"/>
</dbReference>
<dbReference type="InterPro" id="IPR002300">
    <property type="entry name" value="aa-tRNA-synth_Ia"/>
</dbReference>
<dbReference type="InterPro" id="IPR033708">
    <property type="entry name" value="Anticodon_Ile_BEm"/>
</dbReference>
<dbReference type="InterPro" id="IPR002301">
    <property type="entry name" value="Ile-tRNA-ligase"/>
</dbReference>
<dbReference type="InterPro" id="IPR023585">
    <property type="entry name" value="Ile-tRNA-ligase_type1"/>
</dbReference>
<dbReference type="InterPro" id="IPR050081">
    <property type="entry name" value="Ile-tRNA_ligase"/>
</dbReference>
<dbReference type="InterPro" id="IPR013155">
    <property type="entry name" value="M/V/L/I-tRNA-synth_anticd-bd"/>
</dbReference>
<dbReference type="InterPro" id="IPR014729">
    <property type="entry name" value="Rossmann-like_a/b/a_fold"/>
</dbReference>
<dbReference type="InterPro" id="IPR009080">
    <property type="entry name" value="tRNAsynth_Ia_anticodon-bd"/>
</dbReference>
<dbReference type="InterPro" id="IPR009008">
    <property type="entry name" value="Val/Leu/Ile-tRNA-synth_edit"/>
</dbReference>
<dbReference type="NCBIfam" id="TIGR00392">
    <property type="entry name" value="ileS"/>
    <property type="match status" value="1"/>
</dbReference>
<dbReference type="PANTHER" id="PTHR42765:SF1">
    <property type="entry name" value="ISOLEUCINE--TRNA LIGASE, MITOCHONDRIAL"/>
    <property type="match status" value="1"/>
</dbReference>
<dbReference type="PANTHER" id="PTHR42765">
    <property type="entry name" value="SOLEUCYL-TRNA SYNTHETASE"/>
    <property type="match status" value="1"/>
</dbReference>
<dbReference type="Pfam" id="PF08264">
    <property type="entry name" value="Anticodon_1"/>
    <property type="match status" value="1"/>
</dbReference>
<dbReference type="Pfam" id="PF00133">
    <property type="entry name" value="tRNA-synt_1"/>
    <property type="match status" value="1"/>
</dbReference>
<dbReference type="PRINTS" id="PR00984">
    <property type="entry name" value="TRNASYNTHILE"/>
</dbReference>
<dbReference type="SUPFAM" id="SSF47323">
    <property type="entry name" value="Anticodon-binding domain of a subclass of class I aminoacyl-tRNA synthetases"/>
    <property type="match status" value="1"/>
</dbReference>
<dbReference type="SUPFAM" id="SSF52374">
    <property type="entry name" value="Nucleotidylyl transferase"/>
    <property type="match status" value="1"/>
</dbReference>
<dbReference type="SUPFAM" id="SSF50677">
    <property type="entry name" value="ValRS/IleRS/LeuRS editing domain"/>
    <property type="match status" value="1"/>
</dbReference>
<dbReference type="PROSITE" id="PS00178">
    <property type="entry name" value="AA_TRNA_LIGASE_I"/>
    <property type="match status" value="1"/>
</dbReference>